<evidence type="ECO:0000255" key="1">
    <source>
        <dbReference type="HAMAP-Rule" id="MF_00482"/>
    </source>
</evidence>
<evidence type="ECO:0007829" key="2">
    <source>
        <dbReference type="PDB" id="6L35"/>
    </source>
</evidence>
<evidence type="ECO:0007829" key="3">
    <source>
        <dbReference type="PDB" id="7KSQ"/>
    </source>
</evidence>
<evidence type="ECO:0007829" key="4">
    <source>
        <dbReference type="PDB" id="7XQP"/>
    </source>
</evidence>
<evidence type="ECO:0007829" key="5">
    <source>
        <dbReference type="PDB" id="8HTU"/>
    </source>
</evidence>
<reference key="1">
    <citation type="journal article" date="2002" name="Biochim. Biophys. Acta">
        <title>Chloroplast ribosomal S14 protein transcript is edited to create a translation initiation codon in the moss Physcomitrella patens.</title>
        <authorList>
            <person name="Miyata Y."/>
            <person name="Sugiura C."/>
            <person name="Kobayashi Y."/>
            <person name="Hagiwara M."/>
            <person name="Sugita M."/>
        </authorList>
    </citation>
    <scope>NUCLEOTIDE SEQUENCE [GENOMIC DNA]</scope>
    <source>
        <tissue>Protonema</tissue>
    </source>
</reference>
<reference key="2">
    <citation type="journal article" date="2003" name="Nucleic Acids Res.">
        <title>Complete chloroplast DNA sequence of the moss Physcomitrella patens: evidence for the loss and relocation of rpoA from the chloroplast to the nucleus.</title>
        <authorList>
            <person name="Sugiura C."/>
            <person name="Kobayashi Y."/>
            <person name="Setsuyuki A."/>
            <person name="Sugita C."/>
            <person name="Sugita M."/>
        </authorList>
    </citation>
    <scope>NUCLEOTIDE SEQUENCE [LARGE SCALE GENOMIC DNA]</scope>
    <source>
        <strain>cv. Gransden 2004</strain>
    </source>
</reference>
<proteinExistence type="evidence at protein level"/>
<organism>
    <name type="scientific">Physcomitrium patens</name>
    <name type="common">Spreading-leaved earth moss</name>
    <name type="synonym">Physcomitrella patens</name>
    <dbReference type="NCBI Taxonomy" id="3218"/>
    <lineage>
        <taxon>Eukaryota</taxon>
        <taxon>Viridiplantae</taxon>
        <taxon>Streptophyta</taxon>
        <taxon>Embryophyta</taxon>
        <taxon>Bryophyta</taxon>
        <taxon>Bryophytina</taxon>
        <taxon>Bryopsida</taxon>
        <taxon>Funariidae</taxon>
        <taxon>Funariales</taxon>
        <taxon>Funariaceae</taxon>
        <taxon>Physcomitrium</taxon>
    </lineage>
</organism>
<keyword id="KW-0002">3D-structure</keyword>
<keyword id="KW-0004">4Fe-4S</keyword>
<keyword id="KW-0148">Chlorophyll</keyword>
<keyword id="KW-0150">Chloroplast</keyword>
<keyword id="KW-0157">Chromophore</keyword>
<keyword id="KW-0249">Electron transport</keyword>
<keyword id="KW-0408">Iron</keyword>
<keyword id="KW-0411">Iron-sulfur</keyword>
<keyword id="KW-0460">Magnesium</keyword>
<keyword id="KW-0472">Membrane</keyword>
<keyword id="KW-0479">Metal-binding</keyword>
<keyword id="KW-0560">Oxidoreductase</keyword>
<keyword id="KW-0602">Photosynthesis</keyword>
<keyword id="KW-0603">Photosystem I</keyword>
<keyword id="KW-0934">Plastid</keyword>
<keyword id="KW-1185">Reference proteome</keyword>
<keyword id="KW-0793">Thylakoid</keyword>
<keyword id="KW-0812">Transmembrane</keyword>
<keyword id="KW-1133">Transmembrane helix</keyword>
<keyword id="KW-0813">Transport</keyword>
<feature type="chain" id="PRO_0000088631" description="Photosystem I P700 chlorophyll a apoprotein A2">
    <location>
        <begin position="1"/>
        <end position="734"/>
    </location>
</feature>
<feature type="transmembrane region" description="Helical; Name=I" evidence="1">
    <location>
        <begin position="46"/>
        <end position="69"/>
    </location>
</feature>
<feature type="transmembrane region" description="Helical; Name=II" evidence="1">
    <location>
        <begin position="135"/>
        <end position="158"/>
    </location>
</feature>
<feature type="transmembrane region" description="Helical; Name=III" evidence="1">
    <location>
        <begin position="175"/>
        <end position="199"/>
    </location>
</feature>
<feature type="transmembrane region" description="Helical; Name=IV" evidence="1">
    <location>
        <begin position="273"/>
        <end position="291"/>
    </location>
</feature>
<feature type="transmembrane region" description="Helical; Name=V" evidence="1">
    <location>
        <begin position="330"/>
        <end position="353"/>
    </location>
</feature>
<feature type="transmembrane region" description="Helical; Name=VI" evidence="1">
    <location>
        <begin position="369"/>
        <end position="395"/>
    </location>
</feature>
<feature type="transmembrane region" description="Helical; Name=VII" evidence="1">
    <location>
        <begin position="417"/>
        <end position="439"/>
    </location>
</feature>
<feature type="transmembrane region" description="Helical; Name=VIII" evidence="1">
    <location>
        <begin position="517"/>
        <end position="535"/>
    </location>
</feature>
<feature type="transmembrane region" description="Helical; Name=IX" evidence="1">
    <location>
        <begin position="575"/>
        <end position="596"/>
    </location>
</feature>
<feature type="transmembrane region" description="Helical; Name=X" evidence="1">
    <location>
        <begin position="643"/>
        <end position="665"/>
    </location>
</feature>
<feature type="transmembrane region" description="Helical; Name=XI" evidence="1">
    <location>
        <begin position="707"/>
        <end position="727"/>
    </location>
</feature>
<feature type="binding site" evidence="1">
    <location>
        <position position="559"/>
    </location>
    <ligand>
        <name>[4Fe-4S] cluster</name>
        <dbReference type="ChEBI" id="CHEBI:49883"/>
        <note>ligand shared between dimeric partners</note>
    </ligand>
</feature>
<feature type="binding site" evidence="1">
    <location>
        <position position="568"/>
    </location>
    <ligand>
        <name>[4Fe-4S] cluster</name>
        <dbReference type="ChEBI" id="CHEBI:49883"/>
        <note>ligand shared between dimeric partners</note>
    </ligand>
</feature>
<feature type="binding site" description="axial binding residue" evidence="1">
    <location>
        <position position="654"/>
    </location>
    <ligand>
        <name>chlorophyll a</name>
        <dbReference type="ChEBI" id="CHEBI:58416"/>
        <label>B1</label>
    </ligand>
    <ligandPart>
        <name>Mg</name>
        <dbReference type="ChEBI" id="CHEBI:25107"/>
    </ligandPart>
</feature>
<feature type="binding site" description="axial binding residue" evidence="1">
    <location>
        <position position="662"/>
    </location>
    <ligand>
        <name>chlorophyll a</name>
        <dbReference type="ChEBI" id="CHEBI:58416"/>
        <label>B3</label>
    </ligand>
    <ligandPart>
        <name>Mg</name>
        <dbReference type="ChEBI" id="CHEBI:25107"/>
    </ligandPart>
</feature>
<feature type="binding site" evidence="1">
    <location>
        <position position="670"/>
    </location>
    <ligand>
        <name>chlorophyll a</name>
        <dbReference type="ChEBI" id="CHEBI:58416"/>
        <label>B3</label>
    </ligand>
</feature>
<feature type="binding site" evidence="1">
    <location>
        <position position="671"/>
    </location>
    <ligand>
        <name>phylloquinone</name>
        <dbReference type="ChEBI" id="CHEBI:18067"/>
        <label>B</label>
    </ligand>
</feature>
<feature type="helix" evidence="4">
    <location>
        <begin position="10"/>
        <end position="13"/>
    </location>
</feature>
<feature type="helix" evidence="4">
    <location>
        <begin position="19"/>
        <end position="26"/>
    </location>
</feature>
<feature type="turn" evidence="4">
    <location>
        <begin position="27"/>
        <end position="29"/>
    </location>
</feature>
<feature type="helix" evidence="4">
    <location>
        <begin position="31"/>
        <end position="33"/>
    </location>
</feature>
<feature type="strand" evidence="2">
    <location>
        <begin position="34"/>
        <end position="36"/>
    </location>
</feature>
<feature type="helix" evidence="4">
    <location>
        <begin position="39"/>
        <end position="71"/>
    </location>
</feature>
<feature type="helix" evidence="4">
    <location>
        <begin position="74"/>
        <end position="79"/>
    </location>
</feature>
<feature type="turn" evidence="4">
    <location>
        <begin position="81"/>
        <end position="83"/>
    </location>
</feature>
<feature type="strand" evidence="4">
    <location>
        <begin position="87"/>
        <end position="90"/>
    </location>
</feature>
<feature type="helix" evidence="4">
    <location>
        <begin position="98"/>
        <end position="103"/>
    </location>
</feature>
<feature type="strand" evidence="4">
    <location>
        <begin position="113"/>
        <end position="115"/>
    </location>
</feature>
<feature type="helix" evidence="4">
    <location>
        <begin position="120"/>
        <end position="126"/>
    </location>
</feature>
<feature type="helix" evidence="4">
    <location>
        <begin position="132"/>
        <end position="156"/>
    </location>
</feature>
<feature type="turn" evidence="4">
    <location>
        <begin position="159"/>
        <end position="161"/>
    </location>
</feature>
<feature type="helix" evidence="4">
    <location>
        <begin position="165"/>
        <end position="168"/>
    </location>
</feature>
<feature type="helix" evidence="4">
    <location>
        <begin position="171"/>
        <end position="196"/>
    </location>
</feature>
<feature type="helix" evidence="4">
    <location>
        <begin position="198"/>
        <end position="202"/>
    </location>
</feature>
<feature type="strand" evidence="4">
    <location>
        <begin position="209"/>
        <end position="211"/>
    </location>
</feature>
<feature type="turn" evidence="4">
    <location>
        <begin position="212"/>
        <end position="214"/>
    </location>
</feature>
<feature type="strand" evidence="4">
    <location>
        <begin position="217"/>
        <end position="220"/>
    </location>
</feature>
<feature type="helix" evidence="4">
    <location>
        <begin position="223"/>
        <end position="227"/>
    </location>
</feature>
<feature type="helix" evidence="4">
    <location>
        <begin position="230"/>
        <end position="234"/>
    </location>
</feature>
<feature type="turn" evidence="4">
    <location>
        <begin position="263"/>
        <end position="265"/>
    </location>
</feature>
<feature type="helix" evidence="4">
    <location>
        <begin position="270"/>
        <end position="288"/>
    </location>
</feature>
<feature type="strand" evidence="3">
    <location>
        <begin position="293"/>
        <end position="296"/>
    </location>
</feature>
<feature type="helix" evidence="4">
    <location>
        <begin position="301"/>
        <end position="307"/>
    </location>
</feature>
<feature type="strand" evidence="4">
    <location>
        <begin position="313"/>
        <end position="315"/>
    </location>
</feature>
<feature type="turn" evidence="4">
    <location>
        <begin position="316"/>
        <end position="321"/>
    </location>
</feature>
<feature type="helix" evidence="4">
    <location>
        <begin position="322"/>
        <end position="327"/>
    </location>
</feature>
<feature type="helix" evidence="4">
    <location>
        <begin position="330"/>
        <end position="354"/>
    </location>
</feature>
<feature type="turn" evidence="4">
    <location>
        <begin position="359"/>
        <end position="362"/>
    </location>
</feature>
<feature type="helix" evidence="4">
    <location>
        <begin position="365"/>
        <end position="396"/>
    </location>
</feature>
<feature type="turn" evidence="4">
    <location>
        <begin position="400"/>
        <end position="402"/>
    </location>
</feature>
<feature type="strand" evidence="3">
    <location>
        <begin position="403"/>
        <end position="406"/>
    </location>
</feature>
<feature type="helix" evidence="4">
    <location>
        <begin position="407"/>
        <end position="413"/>
    </location>
</feature>
<feature type="helix" evidence="4">
    <location>
        <begin position="415"/>
        <end position="445"/>
    </location>
</feature>
<feature type="helix" evidence="4">
    <location>
        <begin position="449"/>
        <end position="451"/>
    </location>
</feature>
<feature type="helix" evidence="4">
    <location>
        <begin position="458"/>
        <end position="466"/>
    </location>
</feature>
<feature type="helix" evidence="4">
    <location>
        <begin position="477"/>
        <end position="479"/>
    </location>
</feature>
<feature type="helix" evidence="4">
    <location>
        <begin position="484"/>
        <end position="489"/>
    </location>
</feature>
<feature type="turn" evidence="4">
    <location>
        <begin position="490"/>
        <end position="493"/>
    </location>
</feature>
<feature type="helix" evidence="4">
    <location>
        <begin position="494"/>
        <end position="502"/>
    </location>
</feature>
<feature type="strand" evidence="4">
    <location>
        <begin position="504"/>
        <end position="507"/>
    </location>
</feature>
<feature type="helix" evidence="4">
    <location>
        <begin position="514"/>
        <end position="539"/>
    </location>
</feature>
<feature type="strand" evidence="5">
    <location>
        <begin position="540"/>
        <end position="542"/>
    </location>
</feature>
<feature type="helix" evidence="4">
    <location>
        <begin position="550"/>
        <end position="553"/>
    </location>
</feature>
<feature type="helix" evidence="4">
    <location>
        <begin position="563"/>
        <end position="565"/>
    </location>
</feature>
<feature type="helix" evidence="4">
    <location>
        <begin position="572"/>
        <end position="603"/>
    </location>
</feature>
<feature type="helix" evidence="4">
    <location>
        <begin position="606"/>
        <end position="612"/>
    </location>
</feature>
<feature type="helix" evidence="4">
    <location>
        <begin position="616"/>
        <end position="622"/>
    </location>
</feature>
<feature type="helix" evidence="4">
    <location>
        <begin position="624"/>
        <end position="627"/>
    </location>
</feature>
<feature type="helix" evidence="4">
    <location>
        <begin position="629"/>
        <end position="632"/>
    </location>
</feature>
<feature type="strand" evidence="4">
    <location>
        <begin position="634"/>
        <end position="636"/>
    </location>
</feature>
<feature type="helix" evidence="4">
    <location>
        <begin position="644"/>
        <end position="665"/>
    </location>
</feature>
<feature type="helix" evidence="4">
    <location>
        <begin position="668"/>
        <end position="683"/>
    </location>
</feature>
<feature type="turn" evidence="4">
    <location>
        <begin position="686"/>
        <end position="690"/>
    </location>
</feature>
<feature type="strand" evidence="4">
    <location>
        <begin position="694"/>
        <end position="696"/>
    </location>
</feature>
<feature type="helix" evidence="4">
    <location>
        <begin position="702"/>
        <end position="730"/>
    </location>
</feature>
<geneLocation type="chloroplast"/>
<protein>
    <recommendedName>
        <fullName evidence="1">Photosystem I P700 chlorophyll a apoprotein A2</fullName>
        <ecNumber evidence="1">1.97.1.12</ecNumber>
    </recommendedName>
    <alternativeName>
        <fullName evidence="1">PSI-B</fullName>
    </alternativeName>
    <alternativeName>
        <fullName evidence="1">PsaB</fullName>
    </alternativeName>
</protein>
<name>PSAB_PHYPA</name>
<sequence length="734" mass="82365">MASRFPKFSRGLSQDPTTRRIWFGIATAHDFESHDDMTEERLYQKIFASHFGQLAIIFLWTSGNLFHVAWQGNFEAWGQDPLHVRPIAHAIWDPHFGQPAVEAFTRGGASGPVNIAYSGVYQWWYTIGLRTNQDLYGGSIFLLFVSALFLIAGWLHLQPKWKPSVSWFKNAESRLNHHLSGLFGVSSLAWTGHLVHVAIPESRGEHVRWNNLLTALPHPQGLGPFFAGQWNVYAQNPDSNSHLFGTSEGAGTAILTFLGGFHPQTQSLWLTDMAHHHLAIAVIFIIAGHMYRTNFGIGHSMKEILEAHTPPGGRLGRGHKGLYDTINNSLHFQLGLALASLGVITSLVAQHMYSLPPYAFLAQDFTTQAALYTHHQYIAGFIMTGAFAHGAIFFIRDYNPEQNKDNVLARMLEHKEAIISHLSWASLFLGFHTLGLYVHNDVMLAFGTPEKQILIEPVFAQWIQSAHGKALYGFDVLLSSADSPAFNAGQTLWLPGWLDAINNNSNSLFLTIGPGDFLVHHAIALGLHTTTLILVKGALDARGSKLMPDKKEFGYSFPCDGPGRGGTCDISAWDAFYLAVFWMLNTIGWVTFYWHWKHITLWQGNVAQFNESSTYLMGWLRDYLWLNSSQLINGYNPFGMNSLSVWAWMFLFGHLVWATGFMFLISWRGYWQELIETLAWAHERTPLANLVRWKDKPVALSIVQARLVGLAHFSVGYIFTYAAFLIASTSGKFG</sequence>
<accession>Q8MFA2</accession>
<dbReference type="EC" id="1.97.1.12" evidence="1"/>
<dbReference type="EMBL" id="AB078009">
    <property type="protein sequence ID" value="BAC05489.1"/>
    <property type="molecule type" value="Genomic_DNA"/>
</dbReference>
<dbReference type="EMBL" id="AP005672">
    <property type="protein sequence ID" value="BAC85053.1"/>
    <property type="molecule type" value="Genomic_DNA"/>
</dbReference>
<dbReference type="RefSeq" id="NP_904203.1">
    <property type="nucleotide sequence ID" value="NC_005087.2"/>
</dbReference>
<dbReference type="PDB" id="6L35">
    <property type="method" value="EM"/>
    <property type="resolution" value="3.23 A"/>
    <property type="chains" value="B=2-734"/>
</dbReference>
<dbReference type="PDB" id="7KSQ">
    <property type="method" value="EM"/>
    <property type="resolution" value="2.80 A"/>
    <property type="chains" value="B=3-734"/>
</dbReference>
<dbReference type="PDB" id="7KUX">
    <property type="method" value="EM"/>
    <property type="resolution" value="2.80 A"/>
    <property type="chains" value="B=3-734"/>
</dbReference>
<dbReference type="PDB" id="7XQP">
    <property type="method" value="EM"/>
    <property type="resolution" value="2.68 A"/>
    <property type="chains" value="B=2-734"/>
</dbReference>
<dbReference type="PDB" id="8HTU">
    <property type="method" value="EM"/>
    <property type="resolution" value="2.87 A"/>
    <property type="chains" value="B=1-734"/>
</dbReference>
<dbReference type="PDBsum" id="6L35"/>
<dbReference type="PDBsum" id="7KSQ"/>
<dbReference type="PDBsum" id="7KUX"/>
<dbReference type="PDBsum" id="7XQP"/>
<dbReference type="PDBsum" id="8HTU"/>
<dbReference type="EMDB" id="EMD-0821"/>
<dbReference type="EMDB" id="EMD-23023"/>
<dbReference type="EMDB" id="EMD-23040"/>
<dbReference type="EMDB" id="EMD-33401"/>
<dbReference type="EMDB" id="EMD-35018"/>
<dbReference type="SMR" id="Q8MFA2"/>
<dbReference type="FunCoup" id="Q8MFA2">
    <property type="interactions" value="469"/>
</dbReference>
<dbReference type="STRING" id="3218.Q8MFA2"/>
<dbReference type="GeneID" id="2546723"/>
<dbReference type="KEGG" id="ppp:2546723"/>
<dbReference type="InParanoid" id="Q8MFA2"/>
<dbReference type="OrthoDB" id="15at2759"/>
<dbReference type="Proteomes" id="UP000006727">
    <property type="component" value="Chloroplast"/>
</dbReference>
<dbReference type="GO" id="GO:0009535">
    <property type="term" value="C:chloroplast thylakoid membrane"/>
    <property type="evidence" value="ECO:0007669"/>
    <property type="project" value="UniProtKB-SubCell"/>
</dbReference>
<dbReference type="GO" id="GO:0009522">
    <property type="term" value="C:photosystem I"/>
    <property type="evidence" value="ECO:0007669"/>
    <property type="project" value="UniProtKB-KW"/>
</dbReference>
<dbReference type="GO" id="GO:0051539">
    <property type="term" value="F:4 iron, 4 sulfur cluster binding"/>
    <property type="evidence" value="ECO:0007669"/>
    <property type="project" value="UniProtKB-KW"/>
</dbReference>
<dbReference type="GO" id="GO:0016168">
    <property type="term" value="F:chlorophyll binding"/>
    <property type="evidence" value="ECO:0007669"/>
    <property type="project" value="UniProtKB-KW"/>
</dbReference>
<dbReference type="GO" id="GO:0009055">
    <property type="term" value="F:electron transfer activity"/>
    <property type="evidence" value="ECO:0007669"/>
    <property type="project" value="UniProtKB-UniRule"/>
</dbReference>
<dbReference type="GO" id="GO:0000287">
    <property type="term" value="F:magnesium ion binding"/>
    <property type="evidence" value="ECO:0007669"/>
    <property type="project" value="UniProtKB-UniRule"/>
</dbReference>
<dbReference type="GO" id="GO:0016491">
    <property type="term" value="F:oxidoreductase activity"/>
    <property type="evidence" value="ECO:0007669"/>
    <property type="project" value="UniProtKB-KW"/>
</dbReference>
<dbReference type="GO" id="GO:0015979">
    <property type="term" value="P:photosynthesis"/>
    <property type="evidence" value="ECO:0007669"/>
    <property type="project" value="UniProtKB-UniRule"/>
</dbReference>
<dbReference type="FunFam" id="1.20.1130.10:FF:000001">
    <property type="entry name" value="Photosystem I P700 chlorophyll a apoprotein A2"/>
    <property type="match status" value="1"/>
</dbReference>
<dbReference type="Gene3D" id="1.20.1130.10">
    <property type="entry name" value="Photosystem I PsaA/PsaB"/>
    <property type="match status" value="1"/>
</dbReference>
<dbReference type="HAMAP" id="MF_00482">
    <property type="entry name" value="PSI_PsaB"/>
    <property type="match status" value="1"/>
</dbReference>
<dbReference type="InterPro" id="IPR001280">
    <property type="entry name" value="PSI_PsaA/B"/>
</dbReference>
<dbReference type="InterPro" id="IPR020586">
    <property type="entry name" value="PSI_PsaA/B_CS"/>
</dbReference>
<dbReference type="InterPro" id="IPR036408">
    <property type="entry name" value="PSI_PsaA/B_sf"/>
</dbReference>
<dbReference type="InterPro" id="IPR006244">
    <property type="entry name" value="PSI_PsaB"/>
</dbReference>
<dbReference type="NCBIfam" id="TIGR01336">
    <property type="entry name" value="psaB"/>
    <property type="match status" value="1"/>
</dbReference>
<dbReference type="PANTHER" id="PTHR30128">
    <property type="entry name" value="OUTER MEMBRANE PROTEIN, OMPA-RELATED"/>
    <property type="match status" value="1"/>
</dbReference>
<dbReference type="PANTHER" id="PTHR30128:SF19">
    <property type="entry name" value="PHOTOSYSTEM I P700 CHLOROPHYLL A APOPROTEIN A1-RELATED"/>
    <property type="match status" value="1"/>
</dbReference>
<dbReference type="Pfam" id="PF00223">
    <property type="entry name" value="PsaA_PsaB"/>
    <property type="match status" value="1"/>
</dbReference>
<dbReference type="PIRSF" id="PIRSF002905">
    <property type="entry name" value="PSI_A"/>
    <property type="match status" value="1"/>
</dbReference>
<dbReference type="PRINTS" id="PR00257">
    <property type="entry name" value="PHOTSYSPSAAB"/>
</dbReference>
<dbReference type="SUPFAM" id="SSF81558">
    <property type="entry name" value="Photosystem I subunits PsaA/PsaB"/>
    <property type="match status" value="1"/>
</dbReference>
<dbReference type="PROSITE" id="PS00419">
    <property type="entry name" value="PHOTOSYSTEM_I_PSAAB"/>
    <property type="match status" value="1"/>
</dbReference>
<comment type="function">
    <text evidence="1">PsaA and PsaB bind P700, the primary electron donor of photosystem I (PSI), as well as the electron acceptors A0, A1 and FX. PSI is a plastocyanin-ferredoxin oxidoreductase, converting photonic excitation into a charge separation, which transfers an electron from the donor P700 chlorophyll pair to the spectroscopically characterized acceptors A0, A1, FX, FA and FB in turn. Oxidized P700 is reduced on the lumenal side of the thylakoid membrane by plastocyanin.</text>
</comment>
<comment type="catalytic activity">
    <reaction evidence="1">
        <text>reduced [plastocyanin] + hnu + oxidized [2Fe-2S]-[ferredoxin] = oxidized [plastocyanin] + reduced [2Fe-2S]-[ferredoxin]</text>
        <dbReference type="Rhea" id="RHEA:30407"/>
        <dbReference type="Rhea" id="RHEA-COMP:10000"/>
        <dbReference type="Rhea" id="RHEA-COMP:10001"/>
        <dbReference type="Rhea" id="RHEA-COMP:10039"/>
        <dbReference type="Rhea" id="RHEA-COMP:10040"/>
        <dbReference type="ChEBI" id="CHEBI:29036"/>
        <dbReference type="ChEBI" id="CHEBI:30212"/>
        <dbReference type="ChEBI" id="CHEBI:33737"/>
        <dbReference type="ChEBI" id="CHEBI:33738"/>
        <dbReference type="ChEBI" id="CHEBI:49552"/>
        <dbReference type="EC" id="1.97.1.12"/>
    </reaction>
</comment>
<comment type="cofactor">
    <text evidence="1">P700 is a chlorophyll a/chlorophyll a' dimer, A0 is one or more chlorophyll a, A1 is one or both phylloquinones and FX is a shared 4Fe-4S iron-sulfur center.</text>
</comment>
<comment type="subunit">
    <text evidence="1">The PsaA/B heterodimer binds the P700 chlorophyll special pair and subsequent electron acceptors. PSI consists of a core antenna complex that captures photons, and an electron transfer chain that converts photonic excitation into a charge separation. The eukaryotic PSI reaction center is composed of at least 11 subunits.</text>
</comment>
<comment type="subcellular location">
    <subcellularLocation>
        <location evidence="1">Plastid</location>
        <location evidence="1">Chloroplast thylakoid membrane</location>
        <topology evidence="1">Multi-pass membrane protein</topology>
    </subcellularLocation>
</comment>
<comment type="similarity">
    <text evidence="1">Belongs to the PsaA/PsaB family.</text>
</comment>
<gene>
    <name evidence="1" type="primary">psaB</name>
</gene>